<gene>
    <name type="primary">SSBP1</name>
</gene>
<accession>Q5RDQ0</accession>
<keyword id="KW-0007">Acetylation</keyword>
<keyword id="KW-0235">DNA replication</keyword>
<keyword id="KW-0238">DNA-binding</keyword>
<keyword id="KW-0496">Mitochondrion</keyword>
<keyword id="KW-1135">Mitochondrion nucleoid</keyword>
<keyword id="KW-0597">Phosphoprotein</keyword>
<keyword id="KW-1185">Reference proteome</keyword>
<keyword id="KW-0809">Transit peptide</keyword>
<feature type="transit peptide" description="Mitochondrion" evidence="1">
    <location>
        <begin position="1"/>
        <end position="16"/>
    </location>
</feature>
<feature type="chain" id="PRO_0000365068" description="Single-stranded DNA-binding protein, mitochondrial">
    <location>
        <begin position="17"/>
        <end position="148"/>
    </location>
</feature>
<feature type="domain" description="SSB">
    <location>
        <begin position="30"/>
        <end position="141"/>
    </location>
</feature>
<feature type="modified residue" description="Phosphoserine" evidence="2">
    <location>
        <position position="67"/>
    </location>
</feature>
<feature type="modified residue" description="Phosphoserine" evidence="1">
    <location>
        <position position="79"/>
    </location>
</feature>
<feature type="modified residue" description="N6-acetyllysine" evidence="1">
    <location>
        <position position="113"/>
    </location>
</feature>
<feature type="modified residue" description="N6-succinyllysine" evidence="2">
    <location>
        <position position="122"/>
    </location>
</feature>
<proteinExistence type="evidence at transcript level"/>
<dbReference type="EMBL" id="CR857853">
    <property type="protein sequence ID" value="CAH90107.1"/>
    <property type="molecule type" value="mRNA"/>
</dbReference>
<dbReference type="RefSeq" id="NP_001127238.1">
    <property type="nucleotide sequence ID" value="NM_001133766.1"/>
</dbReference>
<dbReference type="RefSeq" id="XP_009241577.1">
    <property type="nucleotide sequence ID" value="XM_009243302.4"/>
</dbReference>
<dbReference type="RefSeq" id="XP_009241578.1">
    <property type="nucleotide sequence ID" value="XM_009243303.1"/>
</dbReference>
<dbReference type="RefSeq" id="XP_009241579.1">
    <property type="nucleotide sequence ID" value="XM_009243304.1"/>
</dbReference>
<dbReference type="RefSeq" id="XP_024105138.1">
    <property type="nucleotide sequence ID" value="XM_024249370.3"/>
</dbReference>
<dbReference type="RefSeq" id="XP_054415040.1">
    <property type="nucleotide sequence ID" value="XM_054559065.1"/>
</dbReference>
<dbReference type="RefSeq" id="XP_054415041.1">
    <property type="nucleotide sequence ID" value="XM_054559066.2"/>
</dbReference>
<dbReference type="RefSeq" id="XP_063581649.1">
    <property type="nucleotide sequence ID" value="XM_063725579.1"/>
</dbReference>
<dbReference type="RefSeq" id="XP_063581650.1">
    <property type="nucleotide sequence ID" value="XM_063725580.1"/>
</dbReference>
<dbReference type="SMR" id="Q5RDQ0"/>
<dbReference type="FunCoup" id="Q5RDQ0">
    <property type="interactions" value="2270"/>
</dbReference>
<dbReference type="STRING" id="9601.ENSPPYP00000020272"/>
<dbReference type="Ensembl" id="ENSPPYT00000021068.3">
    <property type="protein sequence ID" value="ENSPPYP00000020272.2"/>
    <property type="gene ID" value="ENSPPYG00000018068.3"/>
</dbReference>
<dbReference type="GeneID" id="100174293"/>
<dbReference type="KEGG" id="pon:100174293"/>
<dbReference type="CTD" id="6742"/>
<dbReference type="eggNOG" id="KOG1653">
    <property type="taxonomic scope" value="Eukaryota"/>
</dbReference>
<dbReference type="GeneTree" id="ENSGT00390000002796"/>
<dbReference type="HOGENOM" id="CLU_078758_2_1_1"/>
<dbReference type="InParanoid" id="Q5RDQ0"/>
<dbReference type="OMA" id="KTQWHRI"/>
<dbReference type="OrthoDB" id="1078367at2759"/>
<dbReference type="TreeFam" id="TF314629"/>
<dbReference type="Proteomes" id="UP000001595">
    <property type="component" value="Chromosome 7"/>
</dbReference>
<dbReference type="GO" id="GO:0042645">
    <property type="term" value="C:mitochondrial nucleoid"/>
    <property type="evidence" value="ECO:0000250"/>
    <property type="project" value="UniProtKB"/>
</dbReference>
<dbReference type="GO" id="GO:0005739">
    <property type="term" value="C:mitochondrion"/>
    <property type="evidence" value="ECO:0000250"/>
    <property type="project" value="UniProtKB"/>
</dbReference>
<dbReference type="GO" id="GO:0003682">
    <property type="term" value="F:chromatin binding"/>
    <property type="evidence" value="ECO:0000250"/>
    <property type="project" value="UniProtKB"/>
</dbReference>
<dbReference type="GO" id="GO:0003697">
    <property type="term" value="F:single-stranded DNA binding"/>
    <property type="evidence" value="ECO:0000250"/>
    <property type="project" value="UniProtKB"/>
</dbReference>
<dbReference type="GO" id="GO:0006264">
    <property type="term" value="P:mitochondrial DNA replication"/>
    <property type="evidence" value="ECO:0007669"/>
    <property type="project" value="TreeGrafter"/>
</dbReference>
<dbReference type="GO" id="GO:0090297">
    <property type="term" value="P:positive regulation of mitochondrial DNA replication"/>
    <property type="evidence" value="ECO:0000250"/>
    <property type="project" value="UniProtKB"/>
</dbReference>
<dbReference type="GO" id="GO:0051289">
    <property type="term" value="P:protein homotetramerization"/>
    <property type="evidence" value="ECO:0000250"/>
    <property type="project" value="UniProtKB"/>
</dbReference>
<dbReference type="CDD" id="cd04496">
    <property type="entry name" value="SSB_OBF"/>
    <property type="match status" value="1"/>
</dbReference>
<dbReference type="FunFam" id="2.40.50.140:FF:000129">
    <property type="entry name" value="Single-stranded DNA-binding protein 1, mitochondrial"/>
    <property type="match status" value="1"/>
</dbReference>
<dbReference type="Gene3D" id="2.40.50.140">
    <property type="entry name" value="Nucleic acid-binding proteins"/>
    <property type="match status" value="1"/>
</dbReference>
<dbReference type="HAMAP" id="MF_00984">
    <property type="entry name" value="SSB"/>
    <property type="match status" value="1"/>
</dbReference>
<dbReference type="InterPro" id="IPR012340">
    <property type="entry name" value="NA-bd_OB-fold"/>
</dbReference>
<dbReference type="InterPro" id="IPR000424">
    <property type="entry name" value="Primosome_PriB/ssb"/>
</dbReference>
<dbReference type="InterPro" id="IPR011344">
    <property type="entry name" value="ssDNA-bd"/>
</dbReference>
<dbReference type="NCBIfam" id="TIGR00621">
    <property type="entry name" value="ssb"/>
    <property type="match status" value="1"/>
</dbReference>
<dbReference type="PANTHER" id="PTHR10302">
    <property type="entry name" value="SINGLE-STRANDED DNA-BINDING PROTEIN"/>
    <property type="match status" value="1"/>
</dbReference>
<dbReference type="PANTHER" id="PTHR10302:SF0">
    <property type="entry name" value="SINGLE-STRANDED DNA-BINDING PROTEIN, MITOCHONDRIAL"/>
    <property type="match status" value="1"/>
</dbReference>
<dbReference type="Pfam" id="PF00436">
    <property type="entry name" value="SSB"/>
    <property type="match status" value="1"/>
</dbReference>
<dbReference type="PIRSF" id="PIRSF002070">
    <property type="entry name" value="SSB"/>
    <property type="match status" value="1"/>
</dbReference>
<dbReference type="SUPFAM" id="SSF50249">
    <property type="entry name" value="Nucleic acid-binding proteins"/>
    <property type="match status" value="1"/>
</dbReference>
<dbReference type="PROSITE" id="PS50935">
    <property type="entry name" value="SSB"/>
    <property type="match status" value="1"/>
</dbReference>
<name>SSBP_PONAB</name>
<protein>
    <recommendedName>
        <fullName>Single-stranded DNA-binding protein, mitochondrial</fullName>
        <shortName>Mt-SSB</shortName>
        <shortName>MtSSB</shortName>
    </recommendedName>
</protein>
<comment type="function">
    <text evidence="1">Binds preferentially and cooperatively to pyrimidine rich single-stranded DNA (ss-DNA). In vitro, required to maintain the copy number of mitochondrial DNA (mtDNA) and plays a crucial role during mtDNA replication by stimulating the activity of the replisome components POLG and TWNK at the replication fork. Promotes the activity of the gamma complex polymerase POLG, largely by organizing the template DNA and eliminating secondary structures to favor ss-DNA conformations that facilitate POLG activity. In addition it is able to promote the 5'-3' unwinding activity of the mtDNA helicase TWNK. May also function in mtDNA repair.</text>
</comment>
<comment type="subunit">
    <text evidence="1">Homotetramer. Interacts with MPG/AAG, through inhibition of its glycosylase activity it potentially prevents formation of DNA breaks in ssDNA, ensuring that base removal primarily occurs in dsDNA. Interacts with POLDIP2. Interacts with PRIMPOL.</text>
</comment>
<comment type="subcellular location">
    <subcellularLocation>
        <location evidence="1">Mitochondrion</location>
    </subcellularLocation>
    <subcellularLocation>
        <location evidence="1">Mitochondrion matrix</location>
        <location evidence="1">Mitochondrion nucleoid</location>
    </subcellularLocation>
</comment>
<sequence>MFRRPVLQVLRQFVRHESETASSLVLERSLNRVHLLGRVGQDPVLRQVEGKNPVTIFSLATNEMWRSGDSEVYQLGDISQKTTWHRISVFRPGLRDVAYQYVKKGSRIYLEGKIDYGEYMDKNNVRRQATTIIADNIIFLSDQTKEKE</sequence>
<evidence type="ECO:0000250" key="1">
    <source>
        <dbReference type="UniProtKB" id="Q04837"/>
    </source>
</evidence>
<evidence type="ECO:0000250" key="2">
    <source>
        <dbReference type="UniProtKB" id="Q9CYR0"/>
    </source>
</evidence>
<reference key="1">
    <citation type="submission" date="2004-11" db="EMBL/GenBank/DDBJ databases">
        <authorList>
            <consortium name="The German cDNA consortium"/>
        </authorList>
    </citation>
    <scope>NUCLEOTIDE SEQUENCE [LARGE SCALE MRNA]</scope>
    <source>
        <tissue>Kidney</tissue>
    </source>
</reference>
<organism>
    <name type="scientific">Pongo abelii</name>
    <name type="common">Sumatran orangutan</name>
    <name type="synonym">Pongo pygmaeus abelii</name>
    <dbReference type="NCBI Taxonomy" id="9601"/>
    <lineage>
        <taxon>Eukaryota</taxon>
        <taxon>Metazoa</taxon>
        <taxon>Chordata</taxon>
        <taxon>Craniata</taxon>
        <taxon>Vertebrata</taxon>
        <taxon>Euteleostomi</taxon>
        <taxon>Mammalia</taxon>
        <taxon>Eutheria</taxon>
        <taxon>Euarchontoglires</taxon>
        <taxon>Primates</taxon>
        <taxon>Haplorrhini</taxon>
        <taxon>Catarrhini</taxon>
        <taxon>Hominidae</taxon>
        <taxon>Pongo</taxon>
    </lineage>
</organism>